<protein>
    <recommendedName>
        <fullName evidence="1">Polyribonucleotide nucleotidyltransferase</fullName>
        <ecNumber evidence="1">2.7.7.8</ecNumber>
    </recommendedName>
    <alternativeName>
        <fullName evidence="1">Polynucleotide phosphorylase</fullName>
        <shortName evidence="1">PNPase</shortName>
    </alternativeName>
</protein>
<accession>P0DD13</accession>
<accession>Q79W86</accession>
<accession>Q8K5T4</accession>
<name>PNP_STRPQ</name>
<reference key="1">
    <citation type="journal article" date="2003" name="Genome Res.">
        <title>Genome sequence of an M3 strain of Streptococcus pyogenes reveals a large-scale genomic rearrangement in invasive strains and new insights into phage evolution.</title>
        <authorList>
            <person name="Nakagawa I."/>
            <person name="Kurokawa K."/>
            <person name="Yamashita A."/>
            <person name="Nakata M."/>
            <person name="Tomiyasu Y."/>
            <person name="Okahashi N."/>
            <person name="Kawabata S."/>
            <person name="Yamazaki K."/>
            <person name="Shiba T."/>
            <person name="Yasunaga T."/>
            <person name="Hayashi H."/>
            <person name="Hattori M."/>
            <person name="Hamada S."/>
        </authorList>
    </citation>
    <scope>NUCLEOTIDE SEQUENCE [LARGE SCALE GENOMIC DNA]</scope>
    <source>
        <strain>SSI-1</strain>
    </source>
</reference>
<evidence type="ECO:0000255" key="1">
    <source>
        <dbReference type="HAMAP-Rule" id="MF_01595"/>
    </source>
</evidence>
<sequence length="710" mass="77414">MSKQTFTTTFAGKPLVVEVGQVAKQANGATVVRYGDSTVLTATVMSKKMATGDFFPLQVNYEEKMYAAGKFPGGFMKREGRPSTDATLTARLIDRPIRPMFAEGFRNEVQVINTVLSYDENASAPMAAMFGSSLALSISDIPFNGPIAGVQVGYIDGEFIINPDKEQMEASLLELTVAGSKEAINMVESGAKELSEDIMLEALLKGHQAIQELIAFQEQIVAVVGKEKAEVELLQVDADLQADIVAKYNAQLQKAVQVEEKKAREAATEAVKEMVKAEYEERYAEDENLATIMRDVAEILEQMEHAEVRRLITEDKIRPDGRKIDEIRPLDAVVDFLPKVHGSGLFTRGQTQALSVLTLAPMGETQIIDGLAPEYKKRFLHHYNFPQYSVGETGRYGAAGRREIGHGALGERALEQVLPSLEEFPYAIRLVAEVLESNGSSSQASICAGTLALMAGGVPIKAPVAGIAMGLISDGTNYTVLTDIQGLEDHFGDMDFKVAGTREGITALQMDIKIAGITPQILEEALAQAKKARFEILDVIEATIAEPRPELAPTAPKIDTIKIDVDKIKVVIGKGGETIDKIIAETGVKIDIDDEGNVSIYSSDQAAIDRTKEIIAGLVREAKVGEVYHAKVIRIEKFGAFVNLFDKTDALVHISEIAWTRTANVSDVLEVGEDVDVKVIKIDEKGRVDASMKALIPRPPKQEKKEEKHD</sequence>
<organism>
    <name type="scientific">Streptococcus pyogenes serotype M3 (strain SSI-1)</name>
    <dbReference type="NCBI Taxonomy" id="193567"/>
    <lineage>
        <taxon>Bacteria</taxon>
        <taxon>Bacillati</taxon>
        <taxon>Bacillota</taxon>
        <taxon>Bacilli</taxon>
        <taxon>Lactobacillales</taxon>
        <taxon>Streptococcaceae</taxon>
        <taxon>Streptococcus</taxon>
    </lineage>
</organism>
<feature type="chain" id="PRO_0000411444" description="Polyribonucleotide nucleotidyltransferase">
    <location>
        <begin position="1"/>
        <end position="710"/>
    </location>
</feature>
<feature type="domain" description="KH" evidence="1">
    <location>
        <begin position="556"/>
        <end position="615"/>
    </location>
</feature>
<feature type="domain" description="S1 motif" evidence="1">
    <location>
        <begin position="625"/>
        <end position="693"/>
    </location>
</feature>
<feature type="binding site" evidence="1">
    <location>
        <position position="489"/>
    </location>
    <ligand>
        <name>Mg(2+)</name>
        <dbReference type="ChEBI" id="CHEBI:18420"/>
    </ligand>
</feature>
<feature type="binding site" evidence="1">
    <location>
        <position position="495"/>
    </location>
    <ligand>
        <name>Mg(2+)</name>
        <dbReference type="ChEBI" id="CHEBI:18420"/>
    </ligand>
</feature>
<gene>
    <name evidence="1" type="primary">pnp</name>
    <name type="ordered locus">SPs1678</name>
</gene>
<comment type="function">
    <text evidence="1">Involved in mRNA degradation. Catalyzes the phosphorolysis of single-stranded polyribonucleotides processively in the 3'- to 5'-direction.</text>
</comment>
<comment type="catalytic activity">
    <reaction evidence="1">
        <text>RNA(n+1) + phosphate = RNA(n) + a ribonucleoside 5'-diphosphate</text>
        <dbReference type="Rhea" id="RHEA:22096"/>
        <dbReference type="Rhea" id="RHEA-COMP:14527"/>
        <dbReference type="Rhea" id="RHEA-COMP:17342"/>
        <dbReference type="ChEBI" id="CHEBI:43474"/>
        <dbReference type="ChEBI" id="CHEBI:57930"/>
        <dbReference type="ChEBI" id="CHEBI:140395"/>
        <dbReference type="EC" id="2.7.7.8"/>
    </reaction>
</comment>
<comment type="cofactor">
    <cofactor evidence="1">
        <name>Mg(2+)</name>
        <dbReference type="ChEBI" id="CHEBI:18420"/>
    </cofactor>
</comment>
<comment type="subcellular location">
    <subcellularLocation>
        <location evidence="1">Cytoplasm</location>
    </subcellularLocation>
</comment>
<comment type="similarity">
    <text evidence="1">Belongs to the polyribonucleotide nucleotidyltransferase family.</text>
</comment>
<keyword id="KW-0963">Cytoplasm</keyword>
<keyword id="KW-0460">Magnesium</keyword>
<keyword id="KW-0479">Metal-binding</keyword>
<keyword id="KW-0548">Nucleotidyltransferase</keyword>
<keyword id="KW-0694">RNA-binding</keyword>
<keyword id="KW-0808">Transferase</keyword>
<proteinExistence type="inferred from homology"/>
<dbReference type="EC" id="2.7.7.8" evidence="1"/>
<dbReference type="EMBL" id="BA000034">
    <property type="protein sequence ID" value="BAC64773.1"/>
    <property type="molecule type" value="Genomic_DNA"/>
</dbReference>
<dbReference type="RefSeq" id="WP_011055015.1">
    <property type="nucleotide sequence ID" value="NC_004606.1"/>
</dbReference>
<dbReference type="SMR" id="P0DD13"/>
<dbReference type="KEGG" id="sps:SPs1678"/>
<dbReference type="HOGENOM" id="CLU_004217_2_2_9"/>
<dbReference type="GO" id="GO:0005829">
    <property type="term" value="C:cytosol"/>
    <property type="evidence" value="ECO:0007669"/>
    <property type="project" value="TreeGrafter"/>
</dbReference>
<dbReference type="GO" id="GO:0000175">
    <property type="term" value="F:3'-5'-RNA exonuclease activity"/>
    <property type="evidence" value="ECO:0007669"/>
    <property type="project" value="TreeGrafter"/>
</dbReference>
<dbReference type="GO" id="GO:0000287">
    <property type="term" value="F:magnesium ion binding"/>
    <property type="evidence" value="ECO:0007669"/>
    <property type="project" value="UniProtKB-UniRule"/>
</dbReference>
<dbReference type="GO" id="GO:0004654">
    <property type="term" value="F:polyribonucleotide nucleotidyltransferase activity"/>
    <property type="evidence" value="ECO:0007669"/>
    <property type="project" value="UniProtKB-UniRule"/>
</dbReference>
<dbReference type="GO" id="GO:0003723">
    <property type="term" value="F:RNA binding"/>
    <property type="evidence" value="ECO:0007669"/>
    <property type="project" value="UniProtKB-UniRule"/>
</dbReference>
<dbReference type="GO" id="GO:0006402">
    <property type="term" value="P:mRNA catabolic process"/>
    <property type="evidence" value="ECO:0007669"/>
    <property type="project" value="UniProtKB-UniRule"/>
</dbReference>
<dbReference type="GO" id="GO:0006396">
    <property type="term" value="P:RNA processing"/>
    <property type="evidence" value="ECO:0007669"/>
    <property type="project" value="InterPro"/>
</dbReference>
<dbReference type="CDD" id="cd02393">
    <property type="entry name" value="KH-I_PNPase"/>
    <property type="match status" value="1"/>
</dbReference>
<dbReference type="CDD" id="cd11363">
    <property type="entry name" value="RNase_PH_PNPase_1"/>
    <property type="match status" value="1"/>
</dbReference>
<dbReference type="CDD" id="cd11364">
    <property type="entry name" value="RNase_PH_PNPase_2"/>
    <property type="match status" value="1"/>
</dbReference>
<dbReference type="FunFam" id="2.40.50.140:FF:000023">
    <property type="entry name" value="Polyribonucleotide nucleotidyltransferase"/>
    <property type="match status" value="1"/>
</dbReference>
<dbReference type="FunFam" id="3.30.1370.10:FF:000001">
    <property type="entry name" value="Polyribonucleotide nucleotidyltransferase"/>
    <property type="match status" value="1"/>
</dbReference>
<dbReference type="FunFam" id="3.30.230.70:FF:000001">
    <property type="entry name" value="Polyribonucleotide nucleotidyltransferase"/>
    <property type="match status" value="1"/>
</dbReference>
<dbReference type="FunFam" id="3.30.230.70:FF:000002">
    <property type="entry name" value="Polyribonucleotide nucleotidyltransferase"/>
    <property type="match status" value="1"/>
</dbReference>
<dbReference type="Gene3D" id="3.30.230.70">
    <property type="entry name" value="GHMP Kinase, N-terminal domain"/>
    <property type="match status" value="2"/>
</dbReference>
<dbReference type="Gene3D" id="3.30.1370.10">
    <property type="entry name" value="K Homology domain, type 1"/>
    <property type="match status" value="1"/>
</dbReference>
<dbReference type="Gene3D" id="2.40.50.140">
    <property type="entry name" value="Nucleic acid-binding proteins"/>
    <property type="match status" value="1"/>
</dbReference>
<dbReference type="HAMAP" id="MF_01595">
    <property type="entry name" value="PNPase"/>
    <property type="match status" value="1"/>
</dbReference>
<dbReference type="InterPro" id="IPR001247">
    <property type="entry name" value="ExoRNase_PH_dom1"/>
</dbReference>
<dbReference type="InterPro" id="IPR015847">
    <property type="entry name" value="ExoRNase_PH_dom2"/>
</dbReference>
<dbReference type="InterPro" id="IPR036345">
    <property type="entry name" value="ExoRNase_PH_dom2_sf"/>
</dbReference>
<dbReference type="InterPro" id="IPR004087">
    <property type="entry name" value="KH_dom"/>
</dbReference>
<dbReference type="InterPro" id="IPR004088">
    <property type="entry name" value="KH_dom_type_1"/>
</dbReference>
<dbReference type="InterPro" id="IPR036612">
    <property type="entry name" value="KH_dom_type_1_sf"/>
</dbReference>
<dbReference type="InterPro" id="IPR012340">
    <property type="entry name" value="NA-bd_OB-fold"/>
</dbReference>
<dbReference type="InterPro" id="IPR012162">
    <property type="entry name" value="PNPase"/>
</dbReference>
<dbReference type="InterPro" id="IPR027408">
    <property type="entry name" value="PNPase/RNase_PH_dom_sf"/>
</dbReference>
<dbReference type="InterPro" id="IPR015848">
    <property type="entry name" value="PNPase_PH_RNA-bd_bac/org-type"/>
</dbReference>
<dbReference type="InterPro" id="IPR036456">
    <property type="entry name" value="PNPase_PH_RNA-bd_sf"/>
</dbReference>
<dbReference type="InterPro" id="IPR020568">
    <property type="entry name" value="Ribosomal_Su5_D2-typ_SF"/>
</dbReference>
<dbReference type="InterPro" id="IPR003029">
    <property type="entry name" value="S1_domain"/>
</dbReference>
<dbReference type="NCBIfam" id="TIGR03591">
    <property type="entry name" value="polynuc_phos"/>
    <property type="match status" value="1"/>
</dbReference>
<dbReference type="NCBIfam" id="NF008805">
    <property type="entry name" value="PRK11824.1"/>
    <property type="match status" value="1"/>
</dbReference>
<dbReference type="PANTHER" id="PTHR11252">
    <property type="entry name" value="POLYRIBONUCLEOTIDE NUCLEOTIDYLTRANSFERASE"/>
    <property type="match status" value="1"/>
</dbReference>
<dbReference type="PANTHER" id="PTHR11252:SF0">
    <property type="entry name" value="POLYRIBONUCLEOTIDE NUCLEOTIDYLTRANSFERASE 1, MITOCHONDRIAL"/>
    <property type="match status" value="1"/>
</dbReference>
<dbReference type="Pfam" id="PF00013">
    <property type="entry name" value="KH_1"/>
    <property type="match status" value="1"/>
</dbReference>
<dbReference type="Pfam" id="PF03726">
    <property type="entry name" value="PNPase"/>
    <property type="match status" value="1"/>
</dbReference>
<dbReference type="Pfam" id="PF01138">
    <property type="entry name" value="RNase_PH"/>
    <property type="match status" value="2"/>
</dbReference>
<dbReference type="Pfam" id="PF03725">
    <property type="entry name" value="RNase_PH_C"/>
    <property type="match status" value="2"/>
</dbReference>
<dbReference type="Pfam" id="PF00575">
    <property type="entry name" value="S1"/>
    <property type="match status" value="1"/>
</dbReference>
<dbReference type="PIRSF" id="PIRSF005499">
    <property type="entry name" value="PNPase"/>
    <property type="match status" value="1"/>
</dbReference>
<dbReference type="SMART" id="SM00322">
    <property type="entry name" value="KH"/>
    <property type="match status" value="1"/>
</dbReference>
<dbReference type="SMART" id="SM00316">
    <property type="entry name" value="S1"/>
    <property type="match status" value="1"/>
</dbReference>
<dbReference type="SUPFAM" id="SSF54791">
    <property type="entry name" value="Eukaryotic type KH-domain (KH-domain type I)"/>
    <property type="match status" value="1"/>
</dbReference>
<dbReference type="SUPFAM" id="SSF50249">
    <property type="entry name" value="Nucleic acid-binding proteins"/>
    <property type="match status" value="1"/>
</dbReference>
<dbReference type="SUPFAM" id="SSF46915">
    <property type="entry name" value="Polynucleotide phosphorylase/guanosine pentaphosphate synthase (PNPase/GPSI), domain 3"/>
    <property type="match status" value="1"/>
</dbReference>
<dbReference type="SUPFAM" id="SSF55666">
    <property type="entry name" value="Ribonuclease PH domain 2-like"/>
    <property type="match status" value="2"/>
</dbReference>
<dbReference type="SUPFAM" id="SSF54211">
    <property type="entry name" value="Ribosomal protein S5 domain 2-like"/>
    <property type="match status" value="2"/>
</dbReference>
<dbReference type="PROSITE" id="PS50084">
    <property type="entry name" value="KH_TYPE_1"/>
    <property type="match status" value="1"/>
</dbReference>
<dbReference type="PROSITE" id="PS50126">
    <property type="entry name" value="S1"/>
    <property type="match status" value="1"/>
</dbReference>